<keyword id="KW-0963">Cytoplasm</keyword>
<keyword id="KW-0227">DNA damage</keyword>
<keyword id="KW-0228">DNA excision</keyword>
<keyword id="KW-0234">DNA repair</keyword>
<keyword id="KW-0267">Excision nuclease</keyword>
<keyword id="KW-1185">Reference proteome</keyword>
<keyword id="KW-0742">SOS response</keyword>
<proteinExistence type="inferred from homology"/>
<sequence>MGLEEQLRLLPDRPGCYLFKDASGRIIYVGKARNLKNRVRQYFQSSRNLTAKVLAMVGQIVEIEHIVTDTETEALVLESNLIKKHKPKYNIRLRDDKHYPYLRLTLTEQWPRLVVARSMKKDGSRYFGPYTSSQAMWETMKLARRLFPLRTCNDPSRYPRGCLQYHIGRCLGPCLPDFDRHREYAEAVRDLQAFLEGRTQEVLERLRARMEQAAERLEFERAAELRDQIRAIEKVTEKQKIIAHTMVDLDVIAYARLYDEAGVQVFFVRQGKLVGRDQFLMSGADEMTGGEILAAFIQQHYSQTDFVPKEILVSEDLPDADVIAEWLSAKRGSRVALRCPKRGEKRALVEMVAQNAQEAMTERRQQRELELAATEGVLRELQAYLDLPRLPHRIECFDVSHVQGAEVVASMVVFEGGRPKKSDYRRFKMKVDQNNDFANMAEAVGRRFRRGLAERAAQVEGRVRDLEEGRVAEGGAEYGGKFADFPDLLIIDGGKGQLSYARAVMRELGVDHIPTFGLAKENELLCTEDRPDWIELPRGSQALFLLQRIRDEAHRFAITYHRKLHRRASTHSRLDDVPGIGPKRKKALLQHFGSLKAIREASVEEVAQVPGITLELAERVKEALGGPMR</sequence>
<evidence type="ECO:0000255" key="1">
    <source>
        <dbReference type="HAMAP-Rule" id="MF_00203"/>
    </source>
</evidence>
<accession>Q67T37</accession>
<name>UVRC_SYMTH</name>
<protein>
    <recommendedName>
        <fullName evidence="1">UvrABC system protein C</fullName>
        <shortName evidence="1">Protein UvrC</shortName>
    </recommendedName>
    <alternativeName>
        <fullName evidence="1">Excinuclease ABC subunit C</fullName>
    </alternativeName>
</protein>
<feature type="chain" id="PRO_0000227483" description="UvrABC system protein C">
    <location>
        <begin position="1"/>
        <end position="629"/>
    </location>
</feature>
<feature type="domain" description="GIY-YIG" evidence="1">
    <location>
        <begin position="12"/>
        <end position="91"/>
    </location>
</feature>
<feature type="domain" description="UVR" evidence="1">
    <location>
        <begin position="200"/>
        <end position="235"/>
    </location>
</feature>
<dbReference type="EMBL" id="AP006840">
    <property type="protein sequence ID" value="BAD39156.1"/>
    <property type="molecule type" value="Genomic_DNA"/>
</dbReference>
<dbReference type="RefSeq" id="WP_011194306.1">
    <property type="nucleotide sequence ID" value="NC_006177.1"/>
</dbReference>
<dbReference type="SMR" id="Q67T37"/>
<dbReference type="STRING" id="292459.STH171"/>
<dbReference type="KEGG" id="sth:STH171"/>
<dbReference type="eggNOG" id="COG0322">
    <property type="taxonomic scope" value="Bacteria"/>
</dbReference>
<dbReference type="HOGENOM" id="CLU_014841_3_2_9"/>
<dbReference type="OrthoDB" id="9804933at2"/>
<dbReference type="Proteomes" id="UP000000417">
    <property type="component" value="Chromosome"/>
</dbReference>
<dbReference type="GO" id="GO:0005737">
    <property type="term" value="C:cytoplasm"/>
    <property type="evidence" value="ECO:0007669"/>
    <property type="project" value="UniProtKB-SubCell"/>
</dbReference>
<dbReference type="GO" id="GO:0009380">
    <property type="term" value="C:excinuclease repair complex"/>
    <property type="evidence" value="ECO:0007669"/>
    <property type="project" value="InterPro"/>
</dbReference>
<dbReference type="GO" id="GO:0003677">
    <property type="term" value="F:DNA binding"/>
    <property type="evidence" value="ECO:0007669"/>
    <property type="project" value="UniProtKB-UniRule"/>
</dbReference>
<dbReference type="GO" id="GO:0009381">
    <property type="term" value="F:excinuclease ABC activity"/>
    <property type="evidence" value="ECO:0007669"/>
    <property type="project" value="UniProtKB-UniRule"/>
</dbReference>
<dbReference type="GO" id="GO:0006289">
    <property type="term" value="P:nucleotide-excision repair"/>
    <property type="evidence" value="ECO:0007669"/>
    <property type="project" value="UniProtKB-UniRule"/>
</dbReference>
<dbReference type="GO" id="GO:0009432">
    <property type="term" value="P:SOS response"/>
    <property type="evidence" value="ECO:0007669"/>
    <property type="project" value="UniProtKB-UniRule"/>
</dbReference>
<dbReference type="CDD" id="cd10434">
    <property type="entry name" value="GIY-YIG_UvrC_Cho"/>
    <property type="match status" value="1"/>
</dbReference>
<dbReference type="FunFam" id="1.10.150.20:FF:000005">
    <property type="entry name" value="UvrABC system protein C"/>
    <property type="match status" value="1"/>
</dbReference>
<dbReference type="FunFam" id="3.40.1440.10:FF:000001">
    <property type="entry name" value="UvrABC system protein C"/>
    <property type="match status" value="1"/>
</dbReference>
<dbReference type="FunFam" id="4.10.860.10:FF:000002">
    <property type="entry name" value="UvrABC system protein C"/>
    <property type="match status" value="1"/>
</dbReference>
<dbReference type="Gene3D" id="1.10.150.20">
    <property type="entry name" value="5' to 3' exonuclease, C-terminal subdomain"/>
    <property type="match status" value="1"/>
</dbReference>
<dbReference type="Gene3D" id="3.40.1440.10">
    <property type="entry name" value="GIY-YIG endonuclease"/>
    <property type="match status" value="1"/>
</dbReference>
<dbReference type="Gene3D" id="4.10.860.10">
    <property type="entry name" value="UVR domain"/>
    <property type="match status" value="1"/>
</dbReference>
<dbReference type="Gene3D" id="3.30.420.340">
    <property type="entry name" value="UvrC, RNAse H endonuclease domain"/>
    <property type="match status" value="1"/>
</dbReference>
<dbReference type="HAMAP" id="MF_00203">
    <property type="entry name" value="UvrC"/>
    <property type="match status" value="1"/>
</dbReference>
<dbReference type="InterPro" id="IPR000305">
    <property type="entry name" value="GIY-YIG_endonuc"/>
</dbReference>
<dbReference type="InterPro" id="IPR035901">
    <property type="entry name" value="GIY-YIG_endonuc_sf"/>
</dbReference>
<dbReference type="InterPro" id="IPR047296">
    <property type="entry name" value="GIY-YIG_UvrC_Cho"/>
</dbReference>
<dbReference type="InterPro" id="IPR003583">
    <property type="entry name" value="Hlx-hairpin-Hlx_DNA-bd_motif"/>
</dbReference>
<dbReference type="InterPro" id="IPR010994">
    <property type="entry name" value="RuvA_2-like"/>
</dbReference>
<dbReference type="InterPro" id="IPR001943">
    <property type="entry name" value="UVR_dom"/>
</dbReference>
<dbReference type="InterPro" id="IPR036876">
    <property type="entry name" value="UVR_dom_sf"/>
</dbReference>
<dbReference type="InterPro" id="IPR050066">
    <property type="entry name" value="UvrABC_protein_C"/>
</dbReference>
<dbReference type="InterPro" id="IPR004791">
    <property type="entry name" value="UvrC"/>
</dbReference>
<dbReference type="InterPro" id="IPR001162">
    <property type="entry name" value="UvrC_RNase_H_dom"/>
</dbReference>
<dbReference type="InterPro" id="IPR038476">
    <property type="entry name" value="UvrC_RNase_H_dom_sf"/>
</dbReference>
<dbReference type="NCBIfam" id="NF001824">
    <property type="entry name" value="PRK00558.1-5"/>
    <property type="match status" value="1"/>
</dbReference>
<dbReference type="NCBIfam" id="TIGR00194">
    <property type="entry name" value="uvrC"/>
    <property type="match status" value="1"/>
</dbReference>
<dbReference type="PANTHER" id="PTHR30562:SF1">
    <property type="entry name" value="UVRABC SYSTEM PROTEIN C"/>
    <property type="match status" value="1"/>
</dbReference>
<dbReference type="PANTHER" id="PTHR30562">
    <property type="entry name" value="UVRC/OXIDOREDUCTASE"/>
    <property type="match status" value="1"/>
</dbReference>
<dbReference type="Pfam" id="PF01541">
    <property type="entry name" value="GIY-YIG"/>
    <property type="match status" value="1"/>
</dbReference>
<dbReference type="Pfam" id="PF14520">
    <property type="entry name" value="HHH_5"/>
    <property type="match status" value="1"/>
</dbReference>
<dbReference type="Pfam" id="PF02151">
    <property type="entry name" value="UVR"/>
    <property type="match status" value="1"/>
</dbReference>
<dbReference type="Pfam" id="PF22920">
    <property type="entry name" value="UvrC_RNaseH"/>
    <property type="match status" value="1"/>
</dbReference>
<dbReference type="Pfam" id="PF08459">
    <property type="entry name" value="UvrC_RNaseH_dom"/>
    <property type="match status" value="1"/>
</dbReference>
<dbReference type="SMART" id="SM00465">
    <property type="entry name" value="GIYc"/>
    <property type="match status" value="1"/>
</dbReference>
<dbReference type="SMART" id="SM00278">
    <property type="entry name" value="HhH1"/>
    <property type="match status" value="2"/>
</dbReference>
<dbReference type="SUPFAM" id="SSF46600">
    <property type="entry name" value="C-terminal UvrC-binding domain of UvrB"/>
    <property type="match status" value="1"/>
</dbReference>
<dbReference type="SUPFAM" id="SSF82771">
    <property type="entry name" value="GIY-YIG endonuclease"/>
    <property type="match status" value="1"/>
</dbReference>
<dbReference type="SUPFAM" id="SSF47781">
    <property type="entry name" value="RuvA domain 2-like"/>
    <property type="match status" value="1"/>
</dbReference>
<dbReference type="PROSITE" id="PS50164">
    <property type="entry name" value="GIY_YIG"/>
    <property type="match status" value="1"/>
</dbReference>
<dbReference type="PROSITE" id="PS50151">
    <property type="entry name" value="UVR"/>
    <property type="match status" value="1"/>
</dbReference>
<dbReference type="PROSITE" id="PS50165">
    <property type="entry name" value="UVRC"/>
    <property type="match status" value="1"/>
</dbReference>
<gene>
    <name evidence="1" type="primary">uvrC</name>
    <name type="ordered locus">STH171</name>
</gene>
<comment type="function">
    <text evidence="1">The UvrABC repair system catalyzes the recognition and processing of DNA lesions. UvrC both incises the 5' and 3' sides of the lesion. The N-terminal half is responsible for the 3' incision and the C-terminal half is responsible for the 5' incision.</text>
</comment>
<comment type="subunit">
    <text evidence="1">Interacts with UvrB in an incision complex.</text>
</comment>
<comment type="subcellular location">
    <subcellularLocation>
        <location evidence="1">Cytoplasm</location>
    </subcellularLocation>
</comment>
<comment type="similarity">
    <text evidence="1">Belongs to the UvrC family.</text>
</comment>
<organism>
    <name type="scientific">Symbiobacterium thermophilum (strain DSM 24528 / JCM 14929 / IAM 14863 / T)</name>
    <dbReference type="NCBI Taxonomy" id="292459"/>
    <lineage>
        <taxon>Bacteria</taxon>
        <taxon>Bacillati</taxon>
        <taxon>Bacillota</taxon>
        <taxon>Clostridia</taxon>
        <taxon>Eubacteriales</taxon>
        <taxon>Symbiobacteriaceae</taxon>
        <taxon>Symbiobacterium</taxon>
    </lineage>
</organism>
<reference key="1">
    <citation type="journal article" date="2004" name="Nucleic Acids Res.">
        <title>Genome sequence of Symbiobacterium thermophilum, an uncultivable bacterium that depends on microbial commensalism.</title>
        <authorList>
            <person name="Ueda K."/>
            <person name="Yamashita A."/>
            <person name="Ishikawa J."/>
            <person name="Shimada M."/>
            <person name="Watsuji T."/>
            <person name="Morimura K."/>
            <person name="Ikeda H."/>
            <person name="Hattori M."/>
            <person name="Beppu T."/>
        </authorList>
    </citation>
    <scope>NUCLEOTIDE SEQUENCE [LARGE SCALE GENOMIC DNA]</scope>
    <source>
        <strain>DSM 24528 / JCM 14929 / IAM 14863 / T</strain>
    </source>
</reference>